<proteinExistence type="evidence at protein level"/>
<reference key="1">
    <citation type="journal article" date="1993" name="J. Biol. Chem.">
        <title>Cloning and sequencing of the genes coding for the A and B subunits of vacuolar-type Na(+)-ATPase from Enterococcus hirae. Coexistence of vacuolar- and F0F1-type ATPases in one bacterial cell.</title>
        <authorList>
            <person name="Takase K."/>
            <person name="Yamato I."/>
            <person name="Kakinuma Y."/>
        </authorList>
    </citation>
    <scope>NUCLEOTIDE SEQUENCE [GENOMIC DNA]</scope>
    <scope>PROTEIN SEQUENCE OF 1-20; 345-359 AND 381-407</scope>
    <source>
        <strain>ATCC 9790 / DSM 20160 / JCM 8729 / LMG 6399 / NBRC 3181 / NCIMB 6459 / NCDO 1258 / NCTC 12367 / WDCM 00089 / R</strain>
    </source>
</reference>
<reference key="2">
    <citation type="journal article" date="2012" name="J. Bacteriol.">
        <title>Genome sequence of Enterococcus hirae (Streptococcus faecalis) ATCC 9790, a model organism for the study of ion transport, bioenergetics, and copper homeostasis.</title>
        <authorList>
            <person name="Gaechter T."/>
            <person name="Wunderlin C."/>
            <person name="Schmidheini T."/>
            <person name="Solioz M."/>
        </authorList>
    </citation>
    <scope>NUCLEOTIDE SEQUENCE [LARGE SCALE GENOMIC DNA]</scope>
    <source>
        <strain>ATCC 9790 / DSM 20160 / JCM 8729 / LMG 6399 / NBRC 3181 / NCIMB 6459 / NCDO 1258 / NCTC 12367 / WDCM 00089 / R</strain>
    </source>
</reference>
<reference key="3">
    <citation type="journal article" date="1994" name="J. Biol. Chem.">
        <title>Operon of vacuolar-type Na(+)-ATPase of Enterococcus hirae.</title>
        <authorList>
            <person name="Solioz M."/>
            <person name="Davies K."/>
        </authorList>
    </citation>
    <scope>NUCLEOTIDE SEQUENCE [GENOMIC DNA] OF 1-187</scope>
    <source>
        <strain>ATCC 9790 / DSM 20160 / JCM 8729 / LMG 6399 / NBRC 3181 / NCIMB 6459 / NCDO 1258 / NCTC 12367 / WDCM 00089 / R</strain>
    </source>
</reference>
<gene>
    <name type="primary">ntpA</name>
    <name type="ordered locus">EHR_08260</name>
</gene>
<dbReference type="EC" id="7.2.2.1"/>
<dbReference type="EMBL" id="D13816">
    <property type="protein sequence ID" value="BAA02969.1"/>
    <property type="molecule type" value="Genomic_DNA"/>
</dbReference>
<dbReference type="EMBL" id="D17462">
    <property type="protein sequence ID" value="BAA04275.1"/>
    <property type="molecule type" value="Genomic_DNA"/>
</dbReference>
<dbReference type="EMBL" id="CP003504">
    <property type="protein sequence ID" value="AFM70579.1"/>
    <property type="molecule type" value="Genomic_DNA"/>
</dbReference>
<dbReference type="EMBL" id="X76913">
    <property type="protein sequence ID" value="CAA54241.1"/>
    <property type="molecule type" value="Genomic_DNA"/>
</dbReference>
<dbReference type="PIR" id="A46733">
    <property type="entry name" value="A46733"/>
</dbReference>
<dbReference type="RefSeq" id="WP_010718637.1">
    <property type="nucleotide sequence ID" value="NZ_KB946231.1"/>
</dbReference>
<dbReference type="PDB" id="3VR2">
    <property type="method" value="X-ray"/>
    <property type="resolution" value="2.80 A"/>
    <property type="chains" value="A/B/C=1-593"/>
</dbReference>
<dbReference type="PDB" id="3VR3">
    <property type="method" value="X-ray"/>
    <property type="resolution" value="3.40 A"/>
    <property type="chains" value="A/B/C=1-593"/>
</dbReference>
<dbReference type="PDB" id="3VR4">
    <property type="method" value="X-ray"/>
    <property type="resolution" value="2.17 A"/>
    <property type="chains" value="A/B/C=1-593"/>
</dbReference>
<dbReference type="PDB" id="3VR5">
    <property type="method" value="X-ray"/>
    <property type="resolution" value="3.90 A"/>
    <property type="chains" value="A/B/C=1-593"/>
</dbReference>
<dbReference type="PDB" id="3VR6">
    <property type="method" value="X-ray"/>
    <property type="resolution" value="2.68 A"/>
    <property type="chains" value="A/B/C=1-593"/>
</dbReference>
<dbReference type="PDB" id="5KNB">
    <property type="method" value="X-ray"/>
    <property type="resolution" value="3.25 A"/>
    <property type="chains" value="A/B/C=1-593"/>
</dbReference>
<dbReference type="PDB" id="5KNC">
    <property type="method" value="X-ray"/>
    <property type="resolution" value="3.02 A"/>
    <property type="chains" value="A/B/C=1-593"/>
</dbReference>
<dbReference type="PDB" id="5KND">
    <property type="method" value="X-ray"/>
    <property type="resolution" value="2.89 A"/>
    <property type="chains" value="A/B/C=1-593"/>
</dbReference>
<dbReference type="PDB" id="5ZE9">
    <property type="method" value="X-ray"/>
    <property type="resolution" value="2.10 A"/>
    <property type="chains" value="A/B/C=1-593"/>
</dbReference>
<dbReference type="PDB" id="5ZEA">
    <property type="method" value="X-ray"/>
    <property type="resolution" value="3.38 A"/>
    <property type="chains" value="A/B/C/G/H/I=1-587"/>
</dbReference>
<dbReference type="PDB" id="7COQ">
    <property type="method" value="X-ray"/>
    <property type="resolution" value="3.44 A"/>
    <property type="chains" value="A/B/C=1-593"/>
</dbReference>
<dbReference type="PDB" id="7DQC">
    <property type="method" value="X-ray"/>
    <property type="resolution" value="2.71 A"/>
    <property type="chains" value="A/B/C=1-593"/>
</dbReference>
<dbReference type="PDB" id="7DQD">
    <property type="method" value="X-ray"/>
    <property type="resolution" value="3.38 A"/>
    <property type="chains" value="A/B/C/I/J/K=1-593"/>
</dbReference>
<dbReference type="PDB" id="7DQE">
    <property type="method" value="X-ray"/>
    <property type="resolution" value="2.69 A"/>
    <property type="chains" value="A/B/C=1-593"/>
</dbReference>
<dbReference type="PDB" id="8IGU">
    <property type="method" value="X-ray"/>
    <property type="resolution" value="2.77 A"/>
    <property type="chains" value="A/B/C=1-593"/>
</dbReference>
<dbReference type="PDB" id="8IGV">
    <property type="method" value="X-ray"/>
    <property type="resolution" value="3.15 A"/>
    <property type="chains" value="A/B/C=1-593"/>
</dbReference>
<dbReference type="PDB" id="8IGW">
    <property type="method" value="X-ray"/>
    <property type="resolution" value="4.20 A"/>
    <property type="chains" value="A/B/C/G/H/I=1-593"/>
</dbReference>
<dbReference type="PDBsum" id="3VR2"/>
<dbReference type="PDBsum" id="3VR3"/>
<dbReference type="PDBsum" id="3VR4"/>
<dbReference type="PDBsum" id="3VR5"/>
<dbReference type="PDBsum" id="3VR6"/>
<dbReference type="PDBsum" id="5KNB"/>
<dbReference type="PDBsum" id="5KNC"/>
<dbReference type="PDBsum" id="5KND"/>
<dbReference type="PDBsum" id="5ZE9"/>
<dbReference type="PDBsum" id="5ZEA"/>
<dbReference type="PDBsum" id="7COQ"/>
<dbReference type="PDBsum" id="7DQC"/>
<dbReference type="PDBsum" id="7DQD"/>
<dbReference type="PDBsum" id="7DQE"/>
<dbReference type="PDBsum" id="8IGU"/>
<dbReference type="PDBsum" id="8IGV"/>
<dbReference type="PDBsum" id="8IGW"/>
<dbReference type="SMR" id="Q08636"/>
<dbReference type="DIP" id="DIP-60125N"/>
<dbReference type="IntAct" id="Q08636">
    <property type="interactions" value="3"/>
</dbReference>
<dbReference type="TCDB" id="3.A.2.2.2">
    <property type="family name" value="the h+- or na+-translocating f-type, v-type and a-type atpase (f-atpase) superfamily"/>
</dbReference>
<dbReference type="KEGG" id="ehr:EHR_08260"/>
<dbReference type="eggNOG" id="COG1155">
    <property type="taxonomic scope" value="Bacteria"/>
</dbReference>
<dbReference type="HOGENOM" id="CLU_008162_3_1_9"/>
<dbReference type="OrthoDB" id="9803053at2"/>
<dbReference type="BioCyc" id="MetaCyc:MONOMER-14146"/>
<dbReference type="EvolutionaryTrace" id="Q08636"/>
<dbReference type="Proteomes" id="UP000002895">
    <property type="component" value="Chromosome"/>
</dbReference>
<dbReference type="GO" id="GO:0045259">
    <property type="term" value="C:proton-transporting ATP synthase complex"/>
    <property type="evidence" value="ECO:0007669"/>
    <property type="project" value="UniProtKB-ARBA"/>
</dbReference>
<dbReference type="GO" id="GO:0005524">
    <property type="term" value="F:ATP binding"/>
    <property type="evidence" value="ECO:0007669"/>
    <property type="project" value="UniProtKB-UniRule"/>
</dbReference>
<dbReference type="GO" id="GO:0046933">
    <property type="term" value="F:proton-transporting ATP synthase activity, rotational mechanism"/>
    <property type="evidence" value="ECO:0007669"/>
    <property type="project" value="UniProtKB-UniRule"/>
</dbReference>
<dbReference type="GO" id="GO:0046961">
    <property type="term" value="F:proton-transporting ATPase activity, rotational mechanism"/>
    <property type="evidence" value="ECO:0007669"/>
    <property type="project" value="InterPro"/>
</dbReference>
<dbReference type="GO" id="GO:0046962">
    <property type="term" value="F:sodium-transporting ATPase activity, rotational mechanism"/>
    <property type="evidence" value="ECO:0007669"/>
    <property type="project" value="UniProtKB-EC"/>
</dbReference>
<dbReference type="GO" id="GO:0042777">
    <property type="term" value="P:proton motive force-driven plasma membrane ATP synthesis"/>
    <property type="evidence" value="ECO:0007669"/>
    <property type="project" value="UniProtKB-UniRule"/>
</dbReference>
<dbReference type="CDD" id="cd18111">
    <property type="entry name" value="ATP-synt_V_A-type_alpha_C"/>
    <property type="match status" value="1"/>
</dbReference>
<dbReference type="CDD" id="cd18119">
    <property type="entry name" value="ATP-synt_V_A-type_alpha_N"/>
    <property type="match status" value="1"/>
</dbReference>
<dbReference type="CDD" id="cd01134">
    <property type="entry name" value="V_A-ATPase_A"/>
    <property type="match status" value="1"/>
</dbReference>
<dbReference type="FunFam" id="3.40.50.300:FF:000675">
    <property type="entry name" value="V-type ATP synthase alpha chain"/>
    <property type="match status" value="1"/>
</dbReference>
<dbReference type="FunFam" id="1.10.1140.10:FF:000002">
    <property type="entry name" value="V-type proton ATPase catalytic subunit A"/>
    <property type="match status" value="1"/>
</dbReference>
<dbReference type="FunFam" id="2.40.50.100:FF:000008">
    <property type="entry name" value="V-type proton ATPase catalytic subunit A"/>
    <property type="match status" value="1"/>
</dbReference>
<dbReference type="Gene3D" id="2.40.30.20">
    <property type="match status" value="1"/>
</dbReference>
<dbReference type="Gene3D" id="2.40.50.100">
    <property type="match status" value="1"/>
</dbReference>
<dbReference type="Gene3D" id="1.10.1140.10">
    <property type="entry name" value="Bovine Mitochondrial F1-atpase, Atp Synthase Beta Chain, Chain D, domain 3"/>
    <property type="match status" value="1"/>
</dbReference>
<dbReference type="Gene3D" id="3.40.50.300">
    <property type="entry name" value="P-loop containing nucleotide triphosphate hydrolases"/>
    <property type="match status" value="1"/>
</dbReference>
<dbReference type="HAMAP" id="MF_00309">
    <property type="entry name" value="ATP_synth_A_arch"/>
    <property type="match status" value="1"/>
</dbReference>
<dbReference type="InterPro" id="IPR055190">
    <property type="entry name" value="ATP-synt_VA_C"/>
</dbReference>
<dbReference type="InterPro" id="IPR031686">
    <property type="entry name" value="ATP-synth_a_Xtn"/>
</dbReference>
<dbReference type="InterPro" id="IPR023366">
    <property type="entry name" value="ATP_synth_asu-like_sf"/>
</dbReference>
<dbReference type="InterPro" id="IPR020003">
    <property type="entry name" value="ATPase_a/bsu_AS"/>
</dbReference>
<dbReference type="InterPro" id="IPR004100">
    <property type="entry name" value="ATPase_F1/V1/A1_a/bsu_N"/>
</dbReference>
<dbReference type="InterPro" id="IPR036121">
    <property type="entry name" value="ATPase_F1/V1/A1_a/bsu_N_sf"/>
</dbReference>
<dbReference type="InterPro" id="IPR000194">
    <property type="entry name" value="ATPase_F1/V1/A1_a/bsu_nucl-bd"/>
</dbReference>
<dbReference type="InterPro" id="IPR024034">
    <property type="entry name" value="ATPase_F1/V1_b/a_C"/>
</dbReference>
<dbReference type="InterPro" id="IPR027417">
    <property type="entry name" value="P-loop_NTPase"/>
</dbReference>
<dbReference type="InterPro" id="IPR022878">
    <property type="entry name" value="V-ATPase_asu"/>
</dbReference>
<dbReference type="NCBIfam" id="NF003220">
    <property type="entry name" value="PRK04192.1"/>
    <property type="match status" value="1"/>
</dbReference>
<dbReference type="PANTHER" id="PTHR43607:SF1">
    <property type="entry name" value="H(+)-TRANSPORTING TWO-SECTOR ATPASE"/>
    <property type="match status" value="1"/>
</dbReference>
<dbReference type="PANTHER" id="PTHR43607">
    <property type="entry name" value="V-TYPE PROTON ATPASE CATALYTIC SUBUNIT A"/>
    <property type="match status" value="1"/>
</dbReference>
<dbReference type="Pfam" id="PF00006">
    <property type="entry name" value="ATP-synt_ab"/>
    <property type="match status" value="1"/>
</dbReference>
<dbReference type="Pfam" id="PF02874">
    <property type="entry name" value="ATP-synt_ab_N"/>
    <property type="match status" value="1"/>
</dbReference>
<dbReference type="Pfam" id="PF16886">
    <property type="entry name" value="ATP-synt_ab_Xtn"/>
    <property type="match status" value="1"/>
</dbReference>
<dbReference type="Pfam" id="PF22919">
    <property type="entry name" value="ATP-synt_VA_C"/>
    <property type="match status" value="1"/>
</dbReference>
<dbReference type="SUPFAM" id="SSF47917">
    <property type="entry name" value="C-terminal domain of alpha and beta subunits of F1 ATP synthase"/>
    <property type="match status" value="1"/>
</dbReference>
<dbReference type="SUPFAM" id="SSF50615">
    <property type="entry name" value="N-terminal domain of alpha and beta subunits of F1 ATP synthase"/>
    <property type="match status" value="1"/>
</dbReference>
<dbReference type="SUPFAM" id="SSF52540">
    <property type="entry name" value="P-loop containing nucleoside triphosphate hydrolases"/>
    <property type="match status" value="1"/>
</dbReference>
<dbReference type="PROSITE" id="PS00152">
    <property type="entry name" value="ATPASE_ALPHA_BETA"/>
    <property type="match status" value="1"/>
</dbReference>
<sequence length="593" mass="65770">MQIGKIIKVSGPLVMAENMSEASIQDMCLVGDLGVIGEIIEMRQDVASIQVYEETSGIGPGEPVRSTGEALSVELGPGIISQMFDGIQRPLDTFMEVTQSNFLGRGVQLPALDHEKQWWFEATIEEGTEVSAGDIIGYVDETKIIQHKIMVPNGIKGTVQKIESGSFTIDDPICVIETEQGLKELTMMQKWPVRRGRPIKQKLNPDVPMITGQRVIDTFFPVTKGGAAAVPGPFGAGKTVVQHQIAKWSDVDLVVYVGCGERGNEMTDVVNEFPELIDPNTGESLMERTVLIANTSNMPVAAREASIYTGITIAEYFRDMGYDVAIMADSTSRWAEALREMSGRLEEMPGDEGYPAYLGSRLAEYYERSGRVIALGSDQREGSITAISAVSPSGGDISEPVTQNTLRVVKVFWGLDSSLAQKRHFPSINWIQSYSLYSTEVGRYMDQILQQDWSDMVTEGMRILQEEEQLNEIVRLVGIDSLSDNDRLTLEVAKSIREDYLQQNAFDDVDTFTSREKQFNMLKVILTFGKEARKALSLGAYFNEIMEGTVAVRERISRSKYIPEEELAKISSINEEIKETIQLIVSEGGMTDD</sequence>
<name>NTPA_ENTHA</name>
<evidence type="ECO:0000250" key="1"/>
<evidence type="ECO:0000305" key="2"/>
<evidence type="ECO:0007829" key="3">
    <source>
        <dbReference type="PDB" id="3VR2"/>
    </source>
</evidence>
<evidence type="ECO:0007829" key="4">
    <source>
        <dbReference type="PDB" id="3VR3"/>
    </source>
</evidence>
<evidence type="ECO:0007829" key="5">
    <source>
        <dbReference type="PDB" id="3VR4"/>
    </source>
</evidence>
<evidence type="ECO:0007829" key="6">
    <source>
        <dbReference type="PDB" id="5ZE9"/>
    </source>
</evidence>
<evidence type="ECO:0007829" key="7">
    <source>
        <dbReference type="PDB" id="7DQC"/>
    </source>
</evidence>
<evidence type="ECO:0007829" key="8">
    <source>
        <dbReference type="PDB" id="7DQD"/>
    </source>
</evidence>
<evidence type="ECO:0007829" key="9">
    <source>
        <dbReference type="PDB" id="7DQE"/>
    </source>
</evidence>
<protein>
    <recommendedName>
        <fullName>V-type sodium ATPase catalytic subunit A</fullName>
        <ecNumber>7.2.2.1</ecNumber>
    </recommendedName>
    <alternativeName>
        <fullName>Na(+)-translocating ATPase subunit A</fullName>
    </alternativeName>
    <alternativeName>
        <fullName>V-type sodium pump catalytic subunit A</fullName>
    </alternativeName>
</protein>
<feature type="chain" id="PRO_0000144622" description="V-type sodium ATPase catalytic subunit A">
    <location>
        <begin position="1"/>
        <end position="593"/>
    </location>
</feature>
<feature type="binding site" evidence="1">
    <location>
        <begin position="232"/>
        <end position="239"/>
    </location>
    <ligand>
        <name>ATP</name>
        <dbReference type="ChEBI" id="CHEBI:30616"/>
    </ligand>
</feature>
<feature type="strand" evidence="6">
    <location>
        <begin position="4"/>
        <end position="10"/>
    </location>
</feature>
<feature type="strand" evidence="6">
    <location>
        <begin position="13"/>
        <end position="18"/>
    </location>
</feature>
<feature type="strand" evidence="6">
    <location>
        <begin position="26"/>
        <end position="30"/>
    </location>
</feature>
<feature type="turn" evidence="6">
    <location>
        <begin position="31"/>
        <end position="34"/>
    </location>
</feature>
<feature type="strand" evidence="6">
    <location>
        <begin position="35"/>
        <end position="43"/>
    </location>
</feature>
<feature type="strand" evidence="6">
    <location>
        <begin position="46"/>
        <end position="53"/>
    </location>
</feature>
<feature type="strand" evidence="6">
    <location>
        <begin position="63"/>
        <end position="76"/>
    </location>
</feature>
<feature type="strand" evidence="8">
    <location>
        <begin position="82"/>
        <end position="84"/>
    </location>
</feature>
<feature type="helix" evidence="6">
    <location>
        <begin position="91"/>
        <end position="98"/>
    </location>
</feature>
<feature type="strand" evidence="5">
    <location>
        <begin position="100"/>
        <end position="102"/>
    </location>
</feature>
<feature type="strand" evidence="6">
    <location>
        <begin position="118"/>
        <end position="122"/>
    </location>
</feature>
<feature type="strand" evidence="7">
    <location>
        <begin position="129"/>
        <end position="131"/>
    </location>
</feature>
<feature type="strand" evidence="6">
    <location>
        <begin position="135"/>
        <end position="144"/>
    </location>
</feature>
<feature type="strand" evidence="6">
    <location>
        <begin position="146"/>
        <end position="150"/>
    </location>
</feature>
<feature type="strand" evidence="6">
    <location>
        <begin position="157"/>
        <end position="162"/>
    </location>
</feature>
<feature type="strand" evidence="6">
    <location>
        <begin position="165"/>
        <end position="167"/>
    </location>
</feature>
<feature type="strand" evidence="9">
    <location>
        <begin position="169"/>
        <end position="171"/>
    </location>
</feature>
<feature type="strand" evidence="6">
    <location>
        <begin position="174"/>
        <end position="177"/>
    </location>
</feature>
<feature type="strand" evidence="6">
    <location>
        <begin position="182"/>
        <end position="185"/>
    </location>
</feature>
<feature type="strand" evidence="6">
    <location>
        <begin position="189"/>
        <end position="192"/>
    </location>
</feature>
<feature type="strand" evidence="6">
    <location>
        <begin position="200"/>
        <end position="203"/>
    </location>
</feature>
<feature type="helix" evidence="6">
    <location>
        <begin position="214"/>
        <end position="219"/>
    </location>
</feature>
<feature type="strand" evidence="6">
    <location>
        <begin position="227"/>
        <end position="231"/>
    </location>
</feature>
<feature type="helix" evidence="6">
    <location>
        <begin position="238"/>
        <end position="248"/>
    </location>
</feature>
<feature type="strand" evidence="6">
    <location>
        <begin position="252"/>
        <end position="260"/>
    </location>
</feature>
<feature type="helix" evidence="6">
    <location>
        <begin position="263"/>
        <end position="272"/>
    </location>
</feature>
<feature type="helix" evidence="6">
    <location>
        <begin position="273"/>
        <end position="275"/>
    </location>
</feature>
<feature type="turn" evidence="6">
    <location>
        <begin position="279"/>
        <end position="281"/>
    </location>
</feature>
<feature type="strand" evidence="3">
    <location>
        <begin position="282"/>
        <end position="284"/>
    </location>
</feature>
<feature type="helix" evidence="6">
    <location>
        <begin position="285"/>
        <end position="288"/>
    </location>
</feature>
<feature type="strand" evidence="6">
    <location>
        <begin position="289"/>
        <end position="294"/>
    </location>
</feature>
<feature type="helix" evidence="6">
    <location>
        <begin position="301"/>
        <end position="319"/>
    </location>
</feature>
<feature type="strand" evidence="6">
    <location>
        <begin position="323"/>
        <end position="329"/>
    </location>
</feature>
<feature type="helix" evidence="6">
    <location>
        <begin position="331"/>
        <end position="344"/>
    </location>
</feature>
<feature type="helix" evidence="6">
    <location>
        <begin position="351"/>
        <end position="353"/>
    </location>
</feature>
<feature type="helix" evidence="6">
    <location>
        <begin position="358"/>
        <end position="367"/>
    </location>
</feature>
<feature type="strand" evidence="6">
    <location>
        <begin position="370"/>
        <end position="373"/>
    </location>
</feature>
<feature type="strand" evidence="9">
    <location>
        <begin position="375"/>
        <end position="378"/>
    </location>
</feature>
<feature type="strand" evidence="6">
    <location>
        <begin position="381"/>
        <end position="390"/>
    </location>
</feature>
<feature type="helix" evidence="6">
    <location>
        <begin position="393"/>
        <end position="395"/>
    </location>
</feature>
<feature type="strand" evidence="4">
    <location>
        <begin position="397"/>
        <end position="399"/>
    </location>
</feature>
<feature type="helix" evidence="6">
    <location>
        <begin position="400"/>
        <end position="406"/>
    </location>
</feature>
<feature type="strand" evidence="6">
    <location>
        <begin position="410"/>
        <end position="412"/>
    </location>
</feature>
<feature type="helix" evidence="6">
    <location>
        <begin position="417"/>
        <end position="421"/>
    </location>
</feature>
<feature type="turn" evidence="6">
    <location>
        <begin position="430"/>
        <end position="432"/>
    </location>
</feature>
<feature type="helix" evidence="6">
    <location>
        <begin position="438"/>
        <end position="449"/>
    </location>
</feature>
<feature type="helix" evidence="6">
    <location>
        <begin position="453"/>
        <end position="477"/>
    </location>
</feature>
<feature type="helix" evidence="6">
    <location>
        <begin position="479"/>
        <end position="481"/>
    </location>
</feature>
<feature type="helix" evidence="6">
    <location>
        <begin position="484"/>
        <end position="499"/>
    </location>
</feature>
<feature type="strand" evidence="9">
    <location>
        <begin position="505"/>
        <end position="507"/>
    </location>
</feature>
<feature type="turn" evidence="6">
    <location>
        <begin position="508"/>
        <end position="511"/>
    </location>
</feature>
<feature type="helix" evidence="6">
    <location>
        <begin position="515"/>
        <end position="537"/>
    </location>
</feature>
<feature type="strand" evidence="8">
    <location>
        <begin position="538"/>
        <end position="540"/>
    </location>
</feature>
<feature type="helix" evidence="6">
    <location>
        <begin position="542"/>
        <end position="547"/>
    </location>
</feature>
<feature type="helix" evidence="6">
    <location>
        <begin position="550"/>
        <end position="558"/>
    </location>
</feature>
<feature type="helix" evidence="6">
    <location>
        <begin position="559"/>
        <end position="561"/>
    </location>
</feature>
<feature type="helix" evidence="6">
    <location>
        <begin position="564"/>
        <end position="567"/>
    </location>
</feature>
<feature type="helix" evidence="6">
    <location>
        <begin position="568"/>
        <end position="571"/>
    </location>
</feature>
<feature type="helix" evidence="6">
    <location>
        <begin position="573"/>
        <end position="586"/>
    </location>
</feature>
<comment type="function">
    <text>Involved in ATP-driven sodium extrusion.</text>
</comment>
<comment type="catalytic activity">
    <reaction>
        <text>4 Na(+)(in) + ATP + H2O = 4 Na(+)(out) + ADP + phosphate + H(+)</text>
        <dbReference type="Rhea" id="RHEA:58156"/>
        <dbReference type="ChEBI" id="CHEBI:15377"/>
        <dbReference type="ChEBI" id="CHEBI:15378"/>
        <dbReference type="ChEBI" id="CHEBI:29101"/>
        <dbReference type="ChEBI" id="CHEBI:30616"/>
        <dbReference type="ChEBI" id="CHEBI:43474"/>
        <dbReference type="ChEBI" id="CHEBI:456216"/>
        <dbReference type="EC" id="7.2.2.1"/>
    </reaction>
</comment>
<comment type="interaction">
    <interactant intactId="EBI-16032906">
        <id>Q08636</id>
    </interactant>
    <interactant intactId="EBI-16032937">
        <id>Q08637</id>
        <label>ntpB</label>
    </interactant>
    <organismsDiffer>false</organismsDiffer>
    <experiments>3</experiments>
</comment>
<comment type="induction">
    <text>By increasing intracellular Na(+) concentration.</text>
</comment>
<comment type="similarity">
    <text evidence="2">Belongs to the ATPase alpha/beta chains family.</text>
</comment>
<keyword id="KW-0002">3D-structure</keyword>
<keyword id="KW-0067">ATP-binding</keyword>
<keyword id="KW-0903">Direct protein sequencing</keyword>
<keyword id="KW-0406">Ion transport</keyword>
<keyword id="KW-0547">Nucleotide-binding</keyword>
<keyword id="KW-0915">Sodium</keyword>
<keyword id="KW-0739">Sodium transport</keyword>
<keyword id="KW-1278">Translocase</keyword>
<keyword id="KW-0813">Transport</keyword>
<organism>
    <name type="scientific">Enterococcus hirae (strain ATCC 9790 / DSM 20160 / JCM 8729 / LMG 6399 / NBRC 3181 / NCIMB 6459 / NCDO 1258 / NCTC 12367 / WDCM 00089 / R)</name>
    <dbReference type="NCBI Taxonomy" id="768486"/>
    <lineage>
        <taxon>Bacteria</taxon>
        <taxon>Bacillati</taxon>
        <taxon>Bacillota</taxon>
        <taxon>Bacilli</taxon>
        <taxon>Lactobacillales</taxon>
        <taxon>Enterococcaceae</taxon>
        <taxon>Enterococcus</taxon>
    </lineage>
</organism>
<accession>Q08636</accession>
<accession>I6TB93</accession>